<accession>Q7MAX9</accession>
<evidence type="ECO:0000255" key="1">
    <source>
        <dbReference type="HAMAP-Rule" id="MF_00011"/>
    </source>
</evidence>
<feature type="chain" id="PRO_0000095208" description="Adenylosuccinate synthetase 2">
    <location>
        <begin position="1"/>
        <end position="432"/>
    </location>
</feature>
<feature type="active site" description="Proton acceptor" evidence="1">
    <location>
        <position position="14"/>
    </location>
</feature>
<feature type="active site" description="Proton donor" evidence="1">
    <location>
        <position position="42"/>
    </location>
</feature>
<feature type="binding site" evidence="1">
    <location>
        <begin position="13"/>
        <end position="19"/>
    </location>
    <ligand>
        <name>GTP</name>
        <dbReference type="ChEBI" id="CHEBI:37565"/>
    </ligand>
</feature>
<feature type="binding site" description="in other chain" evidence="1">
    <location>
        <begin position="14"/>
        <end position="17"/>
    </location>
    <ligand>
        <name>IMP</name>
        <dbReference type="ChEBI" id="CHEBI:58053"/>
        <note>ligand shared between dimeric partners</note>
    </ligand>
</feature>
<feature type="binding site" evidence="1">
    <location>
        <position position="14"/>
    </location>
    <ligand>
        <name>Mg(2+)</name>
        <dbReference type="ChEBI" id="CHEBI:18420"/>
    </ligand>
</feature>
<feature type="binding site" description="in other chain" evidence="1">
    <location>
        <begin position="39"/>
        <end position="42"/>
    </location>
    <ligand>
        <name>IMP</name>
        <dbReference type="ChEBI" id="CHEBI:58053"/>
        <note>ligand shared between dimeric partners</note>
    </ligand>
</feature>
<feature type="binding site" evidence="1">
    <location>
        <begin position="41"/>
        <end position="43"/>
    </location>
    <ligand>
        <name>GTP</name>
        <dbReference type="ChEBI" id="CHEBI:37565"/>
    </ligand>
</feature>
<feature type="binding site" evidence="1">
    <location>
        <position position="41"/>
    </location>
    <ligand>
        <name>Mg(2+)</name>
        <dbReference type="ChEBI" id="CHEBI:18420"/>
    </ligand>
</feature>
<feature type="binding site" description="in other chain" evidence="1">
    <location>
        <position position="130"/>
    </location>
    <ligand>
        <name>IMP</name>
        <dbReference type="ChEBI" id="CHEBI:58053"/>
        <note>ligand shared between dimeric partners</note>
    </ligand>
</feature>
<feature type="binding site" evidence="1">
    <location>
        <position position="144"/>
    </location>
    <ligand>
        <name>IMP</name>
        <dbReference type="ChEBI" id="CHEBI:58053"/>
        <note>ligand shared between dimeric partners</note>
    </ligand>
</feature>
<feature type="binding site" description="in other chain" evidence="1">
    <location>
        <position position="225"/>
    </location>
    <ligand>
        <name>IMP</name>
        <dbReference type="ChEBI" id="CHEBI:58053"/>
        <note>ligand shared between dimeric partners</note>
    </ligand>
</feature>
<feature type="binding site" description="in other chain" evidence="1">
    <location>
        <position position="240"/>
    </location>
    <ligand>
        <name>IMP</name>
        <dbReference type="ChEBI" id="CHEBI:58053"/>
        <note>ligand shared between dimeric partners</note>
    </ligand>
</feature>
<feature type="binding site" evidence="1">
    <location>
        <begin position="300"/>
        <end position="306"/>
    </location>
    <ligand>
        <name>substrate</name>
    </ligand>
</feature>
<feature type="binding site" description="in other chain" evidence="1">
    <location>
        <position position="304"/>
    </location>
    <ligand>
        <name>IMP</name>
        <dbReference type="ChEBI" id="CHEBI:58053"/>
        <note>ligand shared between dimeric partners</note>
    </ligand>
</feature>
<feature type="binding site" evidence="1">
    <location>
        <position position="306"/>
    </location>
    <ligand>
        <name>GTP</name>
        <dbReference type="ChEBI" id="CHEBI:37565"/>
    </ligand>
</feature>
<feature type="binding site" evidence="1">
    <location>
        <begin position="332"/>
        <end position="334"/>
    </location>
    <ligand>
        <name>GTP</name>
        <dbReference type="ChEBI" id="CHEBI:37565"/>
    </ligand>
</feature>
<feature type="binding site" evidence="1">
    <location>
        <begin position="415"/>
        <end position="417"/>
    </location>
    <ligand>
        <name>GTP</name>
        <dbReference type="ChEBI" id="CHEBI:37565"/>
    </ligand>
</feature>
<reference key="1">
    <citation type="journal article" date="2003" name="Nat. Biotechnol.">
        <title>The genome sequence of the entomopathogenic bacterium Photorhabdus luminescens.</title>
        <authorList>
            <person name="Duchaud E."/>
            <person name="Rusniok C."/>
            <person name="Frangeul L."/>
            <person name="Buchrieser C."/>
            <person name="Givaudan A."/>
            <person name="Taourit S."/>
            <person name="Bocs S."/>
            <person name="Boursaux-Eude C."/>
            <person name="Chandler M."/>
            <person name="Charles J.-F."/>
            <person name="Dassa E."/>
            <person name="Derose R."/>
            <person name="Derzelle S."/>
            <person name="Freyssinet G."/>
            <person name="Gaudriault S."/>
            <person name="Medigue C."/>
            <person name="Lanois A."/>
            <person name="Powell K."/>
            <person name="Siguier P."/>
            <person name="Vincent R."/>
            <person name="Wingate V."/>
            <person name="Zouine M."/>
            <person name="Glaser P."/>
            <person name="Boemare N."/>
            <person name="Danchin A."/>
            <person name="Kunst F."/>
        </authorList>
    </citation>
    <scope>NUCLEOTIDE SEQUENCE [LARGE SCALE GENOMIC DNA]</scope>
    <source>
        <strain>DSM 15139 / CIP 105565 / TT01</strain>
    </source>
</reference>
<sequence>MGKNVVVLGTQWGDEGKGKIVDLLTERAKYVVRYQGGHNAGHTLVINGEKTVLHLIPSGILRENVISIIANGVVLAPDALMKEMNALESRGIPVRERLLISEACPLILPYHVALDNAREKARGAKAIGTTGRGIGPAYEDKVARRGLRVGDLFDKEAFAVKLKEIIEYHNFQLVNYYKEPAVDYQKTLDEIMAVADILTDMVVDVSDLLYKATQKGELVMFEGAQGTLLDIDHGTYPYVTSSNTTAGGVATGSGLGPCYVDYVLGIIKAYSTRVGAGPFPTELFDETGGYLREKGQEFGATTGRSRRTGWLDIIAIRRAVQINSLSGFCMTKLDVLDGLKEVKICTGYRMPDGSVIETTPLAADDWEGIEPVYETMPGWNESTFGVKEHRKLPQAALNYIKRVEELTGVPVDIISTGPDRSETIILRDPFDA</sequence>
<organism>
    <name type="scientific">Photorhabdus laumondii subsp. laumondii (strain DSM 15139 / CIP 105565 / TT01)</name>
    <name type="common">Photorhabdus luminescens subsp. laumondii</name>
    <dbReference type="NCBI Taxonomy" id="243265"/>
    <lineage>
        <taxon>Bacteria</taxon>
        <taxon>Pseudomonadati</taxon>
        <taxon>Pseudomonadota</taxon>
        <taxon>Gammaproteobacteria</taxon>
        <taxon>Enterobacterales</taxon>
        <taxon>Morganellaceae</taxon>
        <taxon>Photorhabdus</taxon>
    </lineage>
</organism>
<keyword id="KW-0963">Cytoplasm</keyword>
<keyword id="KW-0342">GTP-binding</keyword>
<keyword id="KW-0436">Ligase</keyword>
<keyword id="KW-0460">Magnesium</keyword>
<keyword id="KW-0479">Metal-binding</keyword>
<keyword id="KW-0547">Nucleotide-binding</keyword>
<keyword id="KW-0658">Purine biosynthesis</keyword>
<keyword id="KW-1185">Reference proteome</keyword>
<gene>
    <name evidence="1" type="primary">purA2</name>
    <name type="ordered locus">plu4577</name>
</gene>
<dbReference type="EC" id="6.3.4.4" evidence="1"/>
<dbReference type="EMBL" id="BX571874">
    <property type="protein sequence ID" value="CAE16949.1"/>
    <property type="molecule type" value="Genomic_DNA"/>
</dbReference>
<dbReference type="RefSeq" id="WP_011148650.1">
    <property type="nucleotide sequence ID" value="NC_005126.1"/>
</dbReference>
<dbReference type="SMR" id="Q7MAX9"/>
<dbReference type="STRING" id="243265.plu4577"/>
<dbReference type="GeneID" id="48850789"/>
<dbReference type="KEGG" id="plu:plu4577"/>
<dbReference type="eggNOG" id="COG0104">
    <property type="taxonomic scope" value="Bacteria"/>
</dbReference>
<dbReference type="HOGENOM" id="CLU_029848_0_0_6"/>
<dbReference type="OrthoDB" id="9807553at2"/>
<dbReference type="UniPathway" id="UPA00075">
    <property type="reaction ID" value="UER00335"/>
</dbReference>
<dbReference type="Proteomes" id="UP000002514">
    <property type="component" value="Chromosome"/>
</dbReference>
<dbReference type="GO" id="GO:0005737">
    <property type="term" value="C:cytoplasm"/>
    <property type="evidence" value="ECO:0007669"/>
    <property type="project" value="UniProtKB-SubCell"/>
</dbReference>
<dbReference type="GO" id="GO:0004019">
    <property type="term" value="F:adenylosuccinate synthase activity"/>
    <property type="evidence" value="ECO:0007669"/>
    <property type="project" value="UniProtKB-UniRule"/>
</dbReference>
<dbReference type="GO" id="GO:0005525">
    <property type="term" value="F:GTP binding"/>
    <property type="evidence" value="ECO:0007669"/>
    <property type="project" value="UniProtKB-UniRule"/>
</dbReference>
<dbReference type="GO" id="GO:0000287">
    <property type="term" value="F:magnesium ion binding"/>
    <property type="evidence" value="ECO:0007669"/>
    <property type="project" value="UniProtKB-UniRule"/>
</dbReference>
<dbReference type="GO" id="GO:0044208">
    <property type="term" value="P:'de novo' AMP biosynthetic process"/>
    <property type="evidence" value="ECO:0007669"/>
    <property type="project" value="UniProtKB-UniRule"/>
</dbReference>
<dbReference type="GO" id="GO:0046040">
    <property type="term" value="P:IMP metabolic process"/>
    <property type="evidence" value="ECO:0007669"/>
    <property type="project" value="TreeGrafter"/>
</dbReference>
<dbReference type="CDD" id="cd03108">
    <property type="entry name" value="AdSS"/>
    <property type="match status" value="1"/>
</dbReference>
<dbReference type="FunFam" id="1.10.300.10:FF:000001">
    <property type="entry name" value="Adenylosuccinate synthetase"/>
    <property type="match status" value="1"/>
</dbReference>
<dbReference type="FunFam" id="3.90.170.10:FF:000001">
    <property type="entry name" value="Adenylosuccinate synthetase"/>
    <property type="match status" value="1"/>
</dbReference>
<dbReference type="Gene3D" id="3.40.440.10">
    <property type="entry name" value="Adenylosuccinate Synthetase, subunit A, domain 1"/>
    <property type="match status" value="1"/>
</dbReference>
<dbReference type="Gene3D" id="1.10.300.10">
    <property type="entry name" value="Adenylosuccinate Synthetase, subunit A, domain 2"/>
    <property type="match status" value="1"/>
</dbReference>
<dbReference type="Gene3D" id="3.90.170.10">
    <property type="entry name" value="Adenylosuccinate Synthetase, subunit A, domain 3"/>
    <property type="match status" value="1"/>
</dbReference>
<dbReference type="HAMAP" id="MF_00011">
    <property type="entry name" value="Adenylosucc_synth"/>
    <property type="match status" value="1"/>
</dbReference>
<dbReference type="InterPro" id="IPR018220">
    <property type="entry name" value="Adenylosuccin_syn_GTP-bd"/>
</dbReference>
<dbReference type="InterPro" id="IPR033128">
    <property type="entry name" value="Adenylosuccin_syn_Lys_AS"/>
</dbReference>
<dbReference type="InterPro" id="IPR042109">
    <property type="entry name" value="Adenylosuccinate_synth_dom1"/>
</dbReference>
<dbReference type="InterPro" id="IPR042110">
    <property type="entry name" value="Adenylosuccinate_synth_dom2"/>
</dbReference>
<dbReference type="InterPro" id="IPR042111">
    <property type="entry name" value="Adenylosuccinate_synth_dom3"/>
</dbReference>
<dbReference type="InterPro" id="IPR001114">
    <property type="entry name" value="Adenylosuccinate_synthetase"/>
</dbReference>
<dbReference type="InterPro" id="IPR027417">
    <property type="entry name" value="P-loop_NTPase"/>
</dbReference>
<dbReference type="NCBIfam" id="NF002223">
    <property type="entry name" value="PRK01117.1"/>
    <property type="match status" value="1"/>
</dbReference>
<dbReference type="NCBIfam" id="TIGR00184">
    <property type="entry name" value="purA"/>
    <property type="match status" value="1"/>
</dbReference>
<dbReference type="PANTHER" id="PTHR11846">
    <property type="entry name" value="ADENYLOSUCCINATE SYNTHETASE"/>
    <property type="match status" value="1"/>
</dbReference>
<dbReference type="PANTHER" id="PTHR11846:SF0">
    <property type="entry name" value="ADENYLOSUCCINATE SYNTHETASE"/>
    <property type="match status" value="1"/>
</dbReference>
<dbReference type="Pfam" id="PF00709">
    <property type="entry name" value="Adenylsucc_synt"/>
    <property type="match status" value="1"/>
</dbReference>
<dbReference type="SMART" id="SM00788">
    <property type="entry name" value="Adenylsucc_synt"/>
    <property type="match status" value="1"/>
</dbReference>
<dbReference type="SUPFAM" id="SSF52540">
    <property type="entry name" value="P-loop containing nucleoside triphosphate hydrolases"/>
    <property type="match status" value="1"/>
</dbReference>
<dbReference type="PROSITE" id="PS01266">
    <property type="entry name" value="ADENYLOSUCCIN_SYN_1"/>
    <property type="match status" value="1"/>
</dbReference>
<dbReference type="PROSITE" id="PS00513">
    <property type="entry name" value="ADENYLOSUCCIN_SYN_2"/>
    <property type="match status" value="1"/>
</dbReference>
<proteinExistence type="inferred from homology"/>
<comment type="function">
    <text evidence="1">Plays an important role in the de novo pathway of purine nucleotide biosynthesis. Catalyzes the first committed step in the biosynthesis of AMP from IMP.</text>
</comment>
<comment type="catalytic activity">
    <reaction evidence="1">
        <text>IMP + L-aspartate + GTP = N(6)-(1,2-dicarboxyethyl)-AMP + GDP + phosphate + 2 H(+)</text>
        <dbReference type="Rhea" id="RHEA:15753"/>
        <dbReference type="ChEBI" id="CHEBI:15378"/>
        <dbReference type="ChEBI" id="CHEBI:29991"/>
        <dbReference type="ChEBI" id="CHEBI:37565"/>
        <dbReference type="ChEBI" id="CHEBI:43474"/>
        <dbReference type="ChEBI" id="CHEBI:57567"/>
        <dbReference type="ChEBI" id="CHEBI:58053"/>
        <dbReference type="ChEBI" id="CHEBI:58189"/>
        <dbReference type="EC" id="6.3.4.4"/>
    </reaction>
</comment>
<comment type="cofactor">
    <cofactor evidence="1">
        <name>Mg(2+)</name>
        <dbReference type="ChEBI" id="CHEBI:18420"/>
    </cofactor>
    <text evidence="1">Binds 1 Mg(2+) ion per subunit.</text>
</comment>
<comment type="pathway">
    <text evidence="1">Purine metabolism; AMP biosynthesis via de novo pathway; AMP from IMP: step 1/2.</text>
</comment>
<comment type="subunit">
    <text evidence="1">Homodimer.</text>
</comment>
<comment type="subcellular location">
    <subcellularLocation>
        <location evidence="1">Cytoplasm</location>
    </subcellularLocation>
</comment>
<comment type="similarity">
    <text evidence="1">Belongs to the adenylosuccinate synthetase family.</text>
</comment>
<protein>
    <recommendedName>
        <fullName evidence="1">Adenylosuccinate synthetase 2</fullName>
        <shortName evidence="1">AMPSase 2</shortName>
        <shortName evidence="1">AdSS 2</shortName>
        <ecNumber evidence="1">6.3.4.4</ecNumber>
    </recommendedName>
    <alternativeName>
        <fullName evidence="1">IMP--aspartate ligase 2</fullName>
    </alternativeName>
</protein>
<name>PURA2_PHOLL</name>